<keyword id="KW-0687">Ribonucleoprotein</keyword>
<keyword id="KW-0689">Ribosomal protein</keyword>
<feature type="chain" id="PRO_1000196013" description="Large ribosomal subunit protein bL34">
    <location>
        <begin position="1"/>
        <end position="44"/>
    </location>
</feature>
<dbReference type="EMBL" id="CP000958">
    <property type="protein sequence ID" value="ACA92341.1"/>
    <property type="molecule type" value="Genomic_DNA"/>
</dbReference>
<dbReference type="RefSeq" id="WP_004198824.1">
    <property type="nucleotide sequence ID" value="NC_010508.1"/>
</dbReference>
<dbReference type="SMR" id="B1K0Y7"/>
<dbReference type="GeneID" id="98107775"/>
<dbReference type="KEGG" id="bcm:Bcenmc03_3184"/>
<dbReference type="HOGENOM" id="CLU_129938_2_0_4"/>
<dbReference type="Proteomes" id="UP000002169">
    <property type="component" value="Chromosome 1"/>
</dbReference>
<dbReference type="GO" id="GO:1990904">
    <property type="term" value="C:ribonucleoprotein complex"/>
    <property type="evidence" value="ECO:0007669"/>
    <property type="project" value="UniProtKB-KW"/>
</dbReference>
<dbReference type="GO" id="GO:0005840">
    <property type="term" value="C:ribosome"/>
    <property type="evidence" value="ECO:0007669"/>
    <property type="project" value="UniProtKB-KW"/>
</dbReference>
<dbReference type="GO" id="GO:0003735">
    <property type="term" value="F:structural constituent of ribosome"/>
    <property type="evidence" value="ECO:0007669"/>
    <property type="project" value="InterPro"/>
</dbReference>
<dbReference type="GO" id="GO:0006412">
    <property type="term" value="P:translation"/>
    <property type="evidence" value="ECO:0007669"/>
    <property type="project" value="UniProtKB-UniRule"/>
</dbReference>
<dbReference type="FunFam" id="1.10.287.3980:FF:000001">
    <property type="entry name" value="Mitochondrial ribosomal protein L34"/>
    <property type="match status" value="1"/>
</dbReference>
<dbReference type="Gene3D" id="1.10.287.3980">
    <property type="match status" value="1"/>
</dbReference>
<dbReference type="HAMAP" id="MF_00391">
    <property type="entry name" value="Ribosomal_bL34"/>
    <property type="match status" value="1"/>
</dbReference>
<dbReference type="InterPro" id="IPR000271">
    <property type="entry name" value="Ribosomal_bL34"/>
</dbReference>
<dbReference type="InterPro" id="IPR020939">
    <property type="entry name" value="Ribosomal_bL34_CS"/>
</dbReference>
<dbReference type="NCBIfam" id="TIGR01030">
    <property type="entry name" value="rpmH_bact"/>
    <property type="match status" value="1"/>
</dbReference>
<dbReference type="PANTHER" id="PTHR14503:SF4">
    <property type="entry name" value="LARGE RIBOSOMAL SUBUNIT PROTEIN BL34M"/>
    <property type="match status" value="1"/>
</dbReference>
<dbReference type="PANTHER" id="PTHR14503">
    <property type="entry name" value="MITOCHONDRIAL RIBOSOMAL PROTEIN 34 FAMILY MEMBER"/>
    <property type="match status" value="1"/>
</dbReference>
<dbReference type="Pfam" id="PF00468">
    <property type="entry name" value="Ribosomal_L34"/>
    <property type="match status" value="1"/>
</dbReference>
<dbReference type="PROSITE" id="PS00784">
    <property type="entry name" value="RIBOSOMAL_L34"/>
    <property type="match status" value="1"/>
</dbReference>
<reference key="1">
    <citation type="submission" date="2008-02" db="EMBL/GenBank/DDBJ databases">
        <title>Complete sequence of chromosome 1 of Burkholderia cenocepacia MC0-3.</title>
        <authorList>
            <person name="Copeland A."/>
            <person name="Lucas S."/>
            <person name="Lapidus A."/>
            <person name="Barry K."/>
            <person name="Bruce D."/>
            <person name="Goodwin L."/>
            <person name="Glavina del Rio T."/>
            <person name="Dalin E."/>
            <person name="Tice H."/>
            <person name="Pitluck S."/>
            <person name="Chain P."/>
            <person name="Malfatti S."/>
            <person name="Shin M."/>
            <person name="Vergez L."/>
            <person name="Schmutz J."/>
            <person name="Larimer F."/>
            <person name="Land M."/>
            <person name="Hauser L."/>
            <person name="Kyrpides N."/>
            <person name="Mikhailova N."/>
            <person name="Tiedje J."/>
            <person name="Richardson P."/>
        </authorList>
    </citation>
    <scope>NUCLEOTIDE SEQUENCE [LARGE SCALE GENOMIC DNA]</scope>
    <source>
        <strain>MC0-3</strain>
    </source>
</reference>
<proteinExistence type="inferred from homology"/>
<gene>
    <name evidence="1" type="primary">rpmH</name>
    <name type="ordered locus">Bcenmc03_3184</name>
</gene>
<sequence>MKRTYQPSVTRRKRTHGFRVRMKTAGGRKVINARRAKGRKRLAI</sequence>
<protein>
    <recommendedName>
        <fullName evidence="1">Large ribosomal subunit protein bL34</fullName>
    </recommendedName>
    <alternativeName>
        <fullName evidence="2">50S ribosomal protein L34</fullName>
    </alternativeName>
</protein>
<name>RL34_BURO0</name>
<accession>B1K0Y7</accession>
<comment type="similarity">
    <text evidence="1">Belongs to the bacterial ribosomal protein bL34 family.</text>
</comment>
<evidence type="ECO:0000255" key="1">
    <source>
        <dbReference type="HAMAP-Rule" id="MF_00391"/>
    </source>
</evidence>
<evidence type="ECO:0000305" key="2"/>
<organism>
    <name type="scientific">Burkholderia orbicola (strain MC0-3)</name>
    <dbReference type="NCBI Taxonomy" id="406425"/>
    <lineage>
        <taxon>Bacteria</taxon>
        <taxon>Pseudomonadati</taxon>
        <taxon>Pseudomonadota</taxon>
        <taxon>Betaproteobacteria</taxon>
        <taxon>Burkholderiales</taxon>
        <taxon>Burkholderiaceae</taxon>
        <taxon>Burkholderia</taxon>
        <taxon>Burkholderia cepacia complex</taxon>
        <taxon>Burkholderia orbicola</taxon>
    </lineage>
</organism>